<keyword id="KW-0002">3D-structure</keyword>
<keyword id="KW-0067">ATP-binding</keyword>
<keyword id="KW-0068">Autocatalytic cleavage</keyword>
<keyword id="KW-0235">DNA replication</keyword>
<keyword id="KW-0238">DNA-binding</keyword>
<keyword id="KW-0347">Helicase</keyword>
<keyword id="KW-0378">Hydrolase</keyword>
<keyword id="KW-0413">Isomerase</keyword>
<keyword id="KW-0547">Nucleotide-binding</keyword>
<keyword id="KW-0639">Primosome</keyword>
<keyword id="KW-0651">Protein splicing</keyword>
<keyword id="KW-1185">Reference proteome</keyword>
<keyword id="KW-0677">Repeat</keyword>
<organism>
    <name type="scientific">Synechocystis sp. (strain ATCC 27184 / PCC 6803 / Kazusa)</name>
    <dbReference type="NCBI Taxonomy" id="1111708"/>
    <lineage>
        <taxon>Bacteria</taxon>
        <taxon>Bacillati</taxon>
        <taxon>Cyanobacteriota</taxon>
        <taxon>Cyanophyceae</taxon>
        <taxon>Synechococcales</taxon>
        <taxon>Merismopediaceae</taxon>
        <taxon>Synechocystis</taxon>
    </lineage>
</organism>
<feature type="chain" id="PRO_0000013288" description="Replicative DNA helicase DnaB, 1st part">
    <location>
        <begin position="1"/>
        <end position="380"/>
    </location>
</feature>
<feature type="chain" id="PRO_0000013289" description="Ssp DnaB intein">
    <location>
        <begin position="381"/>
        <end position="809"/>
    </location>
</feature>
<feature type="chain" id="PRO_0000013290" description="Replicative DNA helicase DnaB, 2nd part">
    <location>
        <begin position="810"/>
        <end position="872"/>
    </location>
</feature>
<feature type="domain" description="SF4 helicase; first part" evidence="3">
    <location>
        <begin position="176"/>
        <end position="443"/>
    </location>
</feature>
<feature type="domain" description="DOD-type homing endonuclease" evidence="2">
    <location>
        <begin position="494"/>
        <end position="643"/>
    </location>
</feature>
<feature type="domain" description="SF4 helicase; second part" evidence="3">
    <location>
        <begin position="606"/>
        <end position="870"/>
    </location>
</feature>
<feature type="binding site" evidence="3">
    <location>
        <begin position="207"/>
        <end position="214"/>
    </location>
    <ligand>
        <name>ATP</name>
        <dbReference type="ChEBI" id="CHEBI:30616"/>
    </ligand>
</feature>
<feature type="strand" evidence="8">
    <location>
        <begin position="376"/>
        <end position="378"/>
    </location>
</feature>
<feature type="strand" evidence="8">
    <location>
        <begin position="387"/>
        <end position="390"/>
    </location>
</feature>
<feature type="turn" evidence="8">
    <location>
        <begin position="391"/>
        <end position="394"/>
    </location>
</feature>
<feature type="strand" evidence="8">
    <location>
        <begin position="395"/>
        <end position="398"/>
    </location>
</feature>
<feature type="helix" evidence="8">
    <location>
        <begin position="399"/>
        <end position="402"/>
    </location>
</feature>
<feature type="strand" evidence="8">
    <location>
        <begin position="409"/>
        <end position="414"/>
    </location>
</feature>
<feature type="turn" evidence="8">
    <location>
        <begin position="415"/>
        <end position="418"/>
    </location>
</feature>
<feature type="strand" evidence="8">
    <location>
        <begin position="419"/>
        <end position="424"/>
    </location>
</feature>
<feature type="strand" evidence="8">
    <location>
        <begin position="427"/>
        <end position="441"/>
    </location>
</feature>
<feature type="strand" evidence="8">
    <location>
        <begin position="446"/>
        <end position="449"/>
    </location>
</feature>
<feature type="strand" evidence="8">
    <location>
        <begin position="454"/>
        <end position="457"/>
    </location>
</feature>
<feature type="strand" evidence="8">
    <location>
        <begin position="460"/>
        <end position="463"/>
    </location>
</feature>
<feature type="helix" evidence="8">
    <location>
        <begin position="464"/>
        <end position="466"/>
    </location>
</feature>
<feature type="strand" evidence="8">
    <location>
        <begin position="472"/>
        <end position="476"/>
    </location>
</feature>
<feature type="strand" evidence="9">
    <location>
        <begin position="480"/>
        <end position="483"/>
    </location>
</feature>
<feature type="turn" evidence="9">
    <location>
        <begin position="485"/>
        <end position="488"/>
    </location>
</feature>
<feature type="strand" evidence="8">
    <location>
        <begin position="772"/>
        <end position="793"/>
    </location>
</feature>
<feature type="turn" evidence="8">
    <location>
        <begin position="795"/>
        <end position="797"/>
    </location>
</feature>
<feature type="strand" evidence="8">
    <location>
        <begin position="799"/>
        <end position="802"/>
    </location>
</feature>
<feature type="strand" evidence="8">
    <location>
        <begin position="805"/>
        <end position="808"/>
    </location>
</feature>
<feature type="strand" evidence="8">
    <location>
        <begin position="810"/>
        <end position="812"/>
    </location>
</feature>
<evidence type="ECO:0000250" key="1">
    <source>
        <dbReference type="UniProtKB" id="P0ACB0"/>
    </source>
</evidence>
<evidence type="ECO:0000255" key="2">
    <source>
        <dbReference type="PROSITE-ProRule" id="PRU00273"/>
    </source>
</evidence>
<evidence type="ECO:0000255" key="3">
    <source>
        <dbReference type="PROSITE-ProRule" id="PRU00596"/>
    </source>
</evidence>
<evidence type="ECO:0000269" key="4">
    <source>
    </source>
</evidence>
<evidence type="ECO:0000269" key="5">
    <source>
    </source>
</evidence>
<evidence type="ECO:0000303" key="6">
    <source>
    </source>
</evidence>
<evidence type="ECO:0000305" key="7"/>
<evidence type="ECO:0007829" key="8">
    <source>
        <dbReference type="PDB" id="6FRE"/>
    </source>
</evidence>
<evidence type="ECO:0007829" key="9">
    <source>
        <dbReference type="PDB" id="6FRH"/>
    </source>
</evidence>
<gene>
    <name type="primary">dnaB</name>
    <name type="ordered locus">slr0833</name>
</gene>
<reference key="1">
    <citation type="journal article" date="1995" name="DNA Res.">
        <title>Sequence analysis of the genome of the unicellular cyanobacterium Synechocystis sp. strain PCC6803. I. Sequence features in the 1 Mb region from map positions 64% to 92% of the genome.</title>
        <authorList>
            <person name="Kaneko T."/>
            <person name="Tanaka A."/>
            <person name="Sato S."/>
            <person name="Kotani H."/>
            <person name="Sazuka T."/>
            <person name="Miyajima N."/>
            <person name="Sugiura M."/>
            <person name="Tabata S."/>
        </authorList>
    </citation>
    <scope>NUCLEOTIDE SEQUENCE [LARGE SCALE GENOMIC DNA]</scope>
    <source>
        <strain>ATCC 27184 / PCC 6803 / N-1</strain>
    </source>
</reference>
<reference key="2">
    <citation type="journal article" date="1996" name="DNA Res.">
        <title>Sequence analysis of the genome of the unicellular cyanobacterium Synechocystis sp. strain PCC6803. II. Sequence determination of the entire genome and assignment of potential protein-coding regions.</title>
        <authorList>
            <person name="Kaneko T."/>
            <person name="Sato S."/>
            <person name="Kotani H."/>
            <person name="Tanaka A."/>
            <person name="Asamizu E."/>
            <person name="Nakamura Y."/>
            <person name="Miyajima N."/>
            <person name="Hirosawa M."/>
            <person name="Sugiura M."/>
            <person name="Sasamoto S."/>
            <person name="Kimura T."/>
            <person name="Hosouchi T."/>
            <person name="Matsuno A."/>
            <person name="Muraki A."/>
            <person name="Nakazaki N."/>
            <person name="Naruo K."/>
            <person name="Okumura S."/>
            <person name="Shimpo S."/>
            <person name="Takeuchi C."/>
            <person name="Wada T."/>
            <person name="Watanabe A."/>
            <person name="Yamada M."/>
            <person name="Yasuda M."/>
            <person name="Tabata S."/>
        </authorList>
    </citation>
    <scope>NUCLEOTIDE SEQUENCE [LARGE SCALE GENOMIC DNA]</scope>
    <source>
        <strain>ATCC 27184 / PCC 6803 / Kazusa</strain>
    </source>
</reference>
<reference key="3">
    <citation type="journal article" date="1998" name="Biochim. Biophys. Acta">
        <title>Protein trans-splicing and functional mini-inteins of a cyanobacterial dnaB intein.</title>
        <authorList>
            <person name="Wu H."/>
            <person name="Xu M.Q."/>
            <person name="Liu X.Q."/>
        </authorList>
    </citation>
    <scope>CHARACTERIZATION OF INTEIN</scope>
    <scope>CATALYTIC ACTIVITY</scope>
    <source>
        <strain>ATCC 27184 / PCC 6803 / Kazusa</strain>
    </source>
</reference>
<reference key="4">
    <citation type="journal article" date="1999" name="Gene">
        <title>Characterization of a self-splicing mini-intein and its conversion into autocatalytic N- and C-terminal cleavage elements: facile production of protein building blocks for protein ligation.</title>
        <authorList>
            <person name="Mathys S."/>
            <person name="Evans T.C. Jr."/>
            <person name="Chute I.C."/>
            <person name="Wu H."/>
            <person name="Chong S."/>
            <person name="Benner J."/>
            <person name="Liu X.Q."/>
            <person name="Xu M.Q."/>
        </authorList>
    </citation>
    <scope>CHARACTERIZATION OF INTEIN</scope>
    <scope>CATALYTIC ACTIVITY</scope>
    <source>
        <strain>ATCC 27184 / PCC 6803 / Kazusa</strain>
    </source>
</reference>
<name>DNAB_SYNY3</name>
<proteinExistence type="evidence at protein level"/>
<dbReference type="EC" id="5.6.2.3" evidence="1"/>
<dbReference type="EC" id="3.1.-.-" evidence="4 5"/>
<dbReference type="EMBL" id="BA000022">
    <property type="protein sequence ID" value="BAA10516.1"/>
    <property type="molecule type" value="Genomic_DNA"/>
</dbReference>
<dbReference type="PIR" id="S75781">
    <property type="entry name" value="S75781"/>
</dbReference>
<dbReference type="PDB" id="1MI8">
    <property type="method" value="X-ray"/>
    <property type="resolution" value="2.00 A"/>
    <property type="chains" value="A=379-478, A=771-811"/>
</dbReference>
<dbReference type="PDB" id="6FRE">
    <property type="method" value="X-ray"/>
    <property type="resolution" value="1.22 A"/>
    <property type="chains" value="A=376-486"/>
</dbReference>
<dbReference type="PDB" id="6FRG">
    <property type="method" value="X-ray"/>
    <property type="resolution" value="1.53 A"/>
    <property type="chains" value="A=376-486"/>
</dbReference>
<dbReference type="PDB" id="6FRH">
    <property type="method" value="X-ray"/>
    <property type="resolution" value="2.03 A"/>
    <property type="chains" value="A/B=382-491"/>
</dbReference>
<dbReference type="PDBsum" id="1MI8"/>
<dbReference type="PDBsum" id="6FRE"/>
<dbReference type="PDBsum" id="6FRG"/>
<dbReference type="PDBsum" id="6FRH"/>
<dbReference type="SMR" id="Q55418"/>
<dbReference type="IntAct" id="Q55418">
    <property type="interactions" value="1"/>
</dbReference>
<dbReference type="STRING" id="1148.gene:10500020"/>
<dbReference type="MEROPS" id="N10.002"/>
<dbReference type="PaxDb" id="1148-1001271"/>
<dbReference type="EnsemblBacteria" id="BAA10516">
    <property type="protein sequence ID" value="BAA10516"/>
    <property type="gene ID" value="BAA10516"/>
</dbReference>
<dbReference type="KEGG" id="syn:slr0833"/>
<dbReference type="eggNOG" id="COG0305">
    <property type="taxonomic scope" value="Bacteria"/>
</dbReference>
<dbReference type="eggNOG" id="COG1372">
    <property type="taxonomic scope" value="Bacteria"/>
</dbReference>
<dbReference type="InParanoid" id="Q55418"/>
<dbReference type="PhylomeDB" id="Q55418"/>
<dbReference type="EvolutionaryTrace" id="Q55418"/>
<dbReference type="Proteomes" id="UP000001425">
    <property type="component" value="Chromosome"/>
</dbReference>
<dbReference type="GO" id="GO:0005829">
    <property type="term" value="C:cytosol"/>
    <property type="evidence" value="ECO:0000318"/>
    <property type="project" value="GO_Central"/>
</dbReference>
<dbReference type="GO" id="GO:1990077">
    <property type="term" value="C:primosome complex"/>
    <property type="evidence" value="ECO:0007669"/>
    <property type="project" value="UniProtKB-KW"/>
</dbReference>
<dbReference type="GO" id="GO:0005524">
    <property type="term" value="F:ATP binding"/>
    <property type="evidence" value="ECO:0007669"/>
    <property type="project" value="UniProtKB-KW"/>
</dbReference>
<dbReference type="GO" id="GO:0016887">
    <property type="term" value="F:ATP hydrolysis activity"/>
    <property type="evidence" value="ECO:0007669"/>
    <property type="project" value="RHEA"/>
</dbReference>
<dbReference type="GO" id="GO:0003677">
    <property type="term" value="F:DNA binding"/>
    <property type="evidence" value="ECO:0007669"/>
    <property type="project" value="UniProtKB-KW"/>
</dbReference>
<dbReference type="GO" id="GO:0003678">
    <property type="term" value="F:DNA helicase activity"/>
    <property type="evidence" value="ECO:0000318"/>
    <property type="project" value="GO_Central"/>
</dbReference>
<dbReference type="GO" id="GO:0004519">
    <property type="term" value="F:endonuclease activity"/>
    <property type="evidence" value="ECO:0007669"/>
    <property type="project" value="InterPro"/>
</dbReference>
<dbReference type="GO" id="GO:0006260">
    <property type="term" value="P:DNA replication"/>
    <property type="evidence" value="ECO:0000318"/>
    <property type="project" value="GO_Central"/>
</dbReference>
<dbReference type="GO" id="GO:0006269">
    <property type="term" value="P:DNA replication, synthesis of primer"/>
    <property type="evidence" value="ECO:0007669"/>
    <property type="project" value="UniProtKB-KW"/>
</dbReference>
<dbReference type="GO" id="GO:0016539">
    <property type="term" value="P:intein-mediated protein splicing"/>
    <property type="evidence" value="ECO:0007669"/>
    <property type="project" value="InterPro"/>
</dbReference>
<dbReference type="CDD" id="cd00984">
    <property type="entry name" value="DnaB_C"/>
    <property type="match status" value="1"/>
</dbReference>
<dbReference type="CDD" id="cd00081">
    <property type="entry name" value="Hint"/>
    <property type="match status" value="2"/>
</dbReference>
<dbReference type="FunFam" id="1.10.860.10:FF:000001">
    <property type="entry name" value="Replicative DNA helicase"/>
    <property type="match status" value="1"/>
</dbReference>
<dbReference type="FunFam" id="3.40.50.300:FF:002029">
    <property type="entry name" value="Replicative DNA helicase"/>
    <property type="match status" value="1"/>
</dbReference>
<dbReference type="Gene3D" id="1.10.860.10">
    <property type="entry name" value="DNAb Helicase, Chain A"/>
    <property type="match status" value="1"/>
</dbReference>
<dbReference type="Gene3D" id="2.170.16.10">
    <property type="entry name" value="Hedgehog/Intein (Hint) domain"/>
    <property type="match status" value="1"/>
</dbReference>
<dbReference type="Gene3D" id="3.10.28.10">
    <property type="entry name" value="Homing endonucleases"/>
    <property type="match status" value="1"/>
</dbReference>
<dbReference type="Gene3D" id="3.40.50.300">
    <property type="entry name" value="P-loop containing nucleotide triphosphate hydrolases"/>
    <property type="match status" value="2"/>
</dbReference>
<dbReference type="InterPro" id="IPR036185">
    <property type="entry name" value="DNA_heli_DnaB-like_N_sf"/>
</dbReference>
<dbReference type="InterPro" id="IPR007692">
    <property type="entry name" value="DNA_helicase_DnaB"/>
</dbReference>
<dbReference type="InterPro" id="IPR007694">
    <property type="entry name" value="DNA_helicase_DnaB-like_C"/>
</dbReference>
<dbReference type="InterPro" id="IPR007693">
    <property type="entry name" value="DNA_helicase_DnaB-like_N"/>
</dbReference>
<dbReference type="InterPro" id="IPR016136">
    <property type="entry name" value="DNA_helicase_N/primase_C"/>
</dbReference>
<dbReference type="InterPro" id="IPR003586">
    <property type="entry name" value="Hint_dom_C"/>
</dbReference>
<dbReference type="InterPro" id="IPR003587">
    <property type="entry name" value="Hint_dom_N"/>
</dbReference>
<dbReference type="InterPro" id="IPR036844">
    <property type="entry name" value="Hint_dom_sf"/>
</dbReference>
<dbReference type="InterPro" id="IPR027434">
    <property type="entry name" value="Homing_endonucl"/>
</dbReference>
<dbReference type="InterPro" id="IPR006142">
    <property type="entry name" value="INTEIN"/>
</dbReference>
<dbReference type="InterPro" id="IPR030934">
    <property type="entry name" value="Intein_C"/>
</dbReference>
<dbReference type="InterPro" id="IPR004042">
    <property type="entry name" value="Intein_endonuc_central"/>
</dbReference>
<dbReference type="InterPro" id="IPR006141">
    <property type="entry name" value="Intein_N"/>
</dbReference>
<dbReference type="InterPro" id="IPR004860">
    <property type="entry name" value="LAGLIDADG_dom"/>
</dbReference>
<dbReference type="InterPro" id="IPR027417">
    <property type="entry name" value="P-loop_NTPase"/>
</dbReference>
<dbReference type="NCBIfam" id="TIGR00665">
    <property type="entry name" value="DnaB"/>
    <property type="match status" value="1"/>
</dbReference>
<dbReference type="NCBIfam" id="TIGR01443">
    <property type="entry name" value="intein_Cterm"/>
    <property type="match status" value="1"/>
</dbReference>
<dbReference type="NCBIfam" id="TIGR01445">
    <property type="entry name" value="intein_Nterm"/>
    <property type="match status" value="1"/>
</dbReference>
<dbReference type="NCBIfam" id="NF005852">
    <property type="entry name" value="PRK07773.1"/>
    <property type="match status" value="1"/>
</dbReference>
<dbReference type="PANTHER" id="PTHR30153:SF2">
    <property type="entry name" value="REPLICATIVE DNA HELICASE"/>
    <property type="match status" value="1"/>
</dbReference>
<dbReference type="PANTHER" id="PTHR30153">
    <property type="entry name" value="REPLICATIVE DNA HELICASE DNAB"/>
    <property type="match status" value="1"/>
</dbReference>
<dbReference type="Pfam" id="PF00772">
    <property type="entry name" value="DnaB"/>
    <property type="match status" value="1"/>
</dbReference>
<dbReference type="Pfam" id="PF03796">
    <property type="entry name" value="DnaB_C"/>
    <property type="match status" value="2"/>
</dbReference>
<dbReference type="Pfam" id="PF14890">
    <property type="entry name" value="Intein_splicing"/>
    <property type="match status" value="1"/>
</dbReference>
<dbReference type="Pfam" id="PF14528">
    <property type="entry name" value="LAGLIDADG_3"/>
    <property type="match status" value="1"/>
</dbReference>
<dbReference type="PRINTS" id="PR00379">
    <property type="entry name" value="INTEIN"/>
</dbReference>
<dbReference type="SMART" id="SM00305">
    <property type="entry name" value="HintC"/>
    <property type="match status" value="1"/>
</dbReference>
<dbReference type="SMART" id="SM00306">
    <property type="entry name" value="HintN"/>
    <property type="match status" value="1"/>
</dbReference>
<dbReference type="SUPFAM" id="SSF51294">
    <property type="entry name" value="Hedgehog/intein (Hint) domain"/>
    <property type="match status" value="1"/>
</dbReference>
<dbReference type="SUPFAM" id="SSF55608">
    <property type="entry name" value="Homing endonucleases"/>
    <property type="match status" value="1"/>
</dbReference>
<dbReference type="SUPFAM" id="SSF48024">
    <property type="entry name" value="N-terminal domain of DnaB helicase"/>
    <property type="match status" value="1"/>
</dbReference>
<dbReference type="SUPFAM" id="SSF52540">
    <property type="entry name" value="P-loop containing nucleoside triphosphate hydrolases"/>
    <property type="match status" value="1"/>
</dbReference>
<dbReference type="PROSITE" id="PS50818">
    <property type="entry name" value="INTEIN_C_TER"/>
    <property type="match status" value="1"/>
</dbReference>
<dbReference type="PROSITE" id="PS50819">
    <property type="entry name" value="INTEIN_ENDONUCLEASE"/>
    <property type="match status" value="1"/>
</dbReference>
<dbReference type="PROSITE" id="PS50817">
    <property type="entry name" value="INTEIN_N_TER"/>
    <property type="match status" value="1"/>
</dbReference>
<dbReference type="PROSITE" id="PS51199">
    <property type="entry name" value="SF4_HELICASE"/>
    <property type="match status" value="2"/>
</dbReference>
<accession>Q55418</accession>
<protein>
    <recommendedName>
        <fullName>Replicative DNA helicase DnaB</fullName>
        <ecNumber evidence="1">5.6.2.3</ecNumber>
    </recommendedName>
    <alternativeName>
        <fullName evidence="7">DNA 5'-3' helicase DnaB</fullName>
    </alternativeName>
    <component>
        <recommendedName>
            <fullName evidence="6">Ssp DnaB intein</fullName>
            <ecNumber evidence="4 5">3.1.-.-</ecNumber>
        </recommendedName>
    </component>
</protein>
<sequence length="872" mass="97813">MAANPALPPQNIEAEECILGGILLDPEAMGRIIDLLVVDAFYVKAHRLIYEAMLSLHGQSQPTDLMSVSSWLQDHHHFEAIGGMVKLTQLLDRTISAVNIDRFAALIMDKYLRRQLIAAGHDIVDLGYETSKELETIFDESEQKIFRLTQSRPQAGLVPLSETLVNTFIELDKLHEKLSSPGVETQFYDLDAMTGGLQRADLIILAGRPSMGKTAFGLGIAANIAKNQNLPVAIFSLEMSKEQLALRLVASESLIDSNRLRTGHFSQAEFEPLTAAMGTLSSLPIYIDDTASISVTQMRSQVRRLQSEQKGPLGMVLIDYLQLMEGGSDNRVQELSKITRSLKGLAREINAPVIALSQLSRAVESRTNKRPMMSDLRESGCISGDSLISLASTGKRVSIKDLLDEKDFEIWAINEQTMKLESAKVSRVFCTGKKLVYILKTRLGRTIKATANHRFLTIDGWKRLDELSLKEHIALPRKLESSSLQLMSDEELGLLGHLIGDGCTLPRHAIQYTSNKIELAEKVVELAKAVFGDQINPRISQERQWYQVYIPASYRLTHNKKNPITKWLENLDVFGLRSYEKFVPNQVFEQPQRAIAIFLRHLWSTDGCVKLIVEKSSRPVAYYATSSEKLAKDVQSLLLKLGINARLSKISQNGKGRDNYHVTITGQADLQIFVDQIGAVDKDKQASVEEIKTHIAQHQANTNRDVIPKQIWKTYVLPQIQIKGITTRDLQMRLGNAYCGTALYKHNLSRERAAKIATITQSPEIEKLSQSDIYWDSIVSITETGVEEVFDLTVPGPHNFVANDIIVHNSIEQDADLIMMIYRDEYYNPDTPDPGVAELLIVKHRNGPTGVVKLLFKPEFTQFLNLQRSNDY</sequence>
<comment type="function">
    <text evidence="1">The main replicative DNA helicase, it participates in initiation and elongation during chromosome replication. Travels ahead of the DNA replisome, separating dsDNA into templates for DNA synthesis. A processive ATP-dependent 5'-3' DNA helicase it has DNA-dependent ATPase activity.</text>
</comment>
<comment type="function">
    <text evidence="4 5">The intein is an endonuclease.</text>
</comment>
<comment type="catalytic activity">
    <reaction evidence="1">
        <text>Couples ATP hydrolysis with the unwinding of duplex DNA at the replication fork by translocating in the 5'-3' direction. This creates two antiparallel DNA single strands (ssDNA). The leading ssDNA polymer is the template for DNA polymerase III holoenzyme which synthesizes a continuous strand.</text>
        <dbReference type="EC" id="5.6.2.3"/>
    </reaction>
</comment>
<comment type="catalytic activity">
    <reaction evidence="1">
        <text>ATP + H2O = ADP + phosphate + H(+)</text>
        <dbReference type="Rhea" id="RHEA:13065"/>
        <dbReference type="ChEBI" id="CHEBI:15377"/>
        <dbReference type="ChEBI" id="CHEBI:15378"/>
        <dbReference type="ChEBI" id="CHEBI:30616"/>
        <dbReference type="ChEBI" id="CHEBI:43474"/>
        <dbReference type="ChEBI" id="CHEBI:456216"/>
        <dbReference type="EC" id="5.6.2.3"/>
    </reaction>
</comment>
<comment type="subunit">
    <text evidence="1">Homohexamer.</text>
</comment>
<comment type="PTM">
    <text evidence="4 5">This protein undergoes a protein self splicing that involves a post-translational excision of the intervening region (intein) followed by peptide ligation (PubMed:10231563, PubMed:9748659). The intein-coding region can be inserted into another gene and undergo protein splicing (PubMed:10231563, PubMed:9748659).</text>
</comment>
<comment type="similarity">
    <text evidence="7">Belongs to the helicase family. DnaB subfamily.</text>
</comment>